<organism>
    <name type="scientific">Albidiferax ferrireducens (strain ATCC BAA-621 / DSM 15236 / T118)</name>
    <name type="common">Rhodoferax ferrireducens</name>
    <dbReference type="NCBI Taxonomy" id="338969"/>
    <lineage>
        <taxon>Bacteria</taxon>
        <taxon>Pseudomonadati</taxon>
        <taxon>Pseudomonadota</taxon>
        <taxon>Betaproteobacteria</taxon>
        <taxon>Burkholderiales</taxon>
        <taxon>Comamonadaceae</taxon>
        <taxon>Rhodoferax</taxon>
    </lineage>
</organism>
<sequence>MSLTSTDIARIANLARLELKAAESERMLTQINGFFALVEKMRAVDTTGIEPLAHPVATVQDITLRLREDRVSEPNQREANQRNAPALEHGLFLVPKVIE</sequence>
<dbReference type="EC" id="6.3.5.-" evidence="1"/>
<dbReference type="EMBL" id="CP000267">
    <property type="protein sequence ID" value="ABD71623.1"/>
    <property type="molecule type" value="Genomic_DNA"/>
</dbReference>
<dbReference type="RefSeq" id="WP_011466185.1">
    <property type="nucleotide sequence ID" value="NC_007908.1"/>
</dbReference>
<dbReference type="SMR" id="Q21RI0"/>
<dbReference type="STRING" id="338969.Rfer_3924"/>
<dbReference type="KEGG" id="rfr:Rfer_3924"/>
<dbReference type="eggNOG" id="COG0721">
    <property type="taxonomic scope" value="Bacteria"/>
</dbReference>
<dbReference type="HOGENOM" id="CLU_105899_2_2_4"/>
<dbReference type="OrthoDB" id="9794326at2"/>
<dbReference type="Proteomes" id="UP000008332">
    <property type="component" value="Chromosome"/>
</dbReference>
<dbReference type="GO" id="GO:0050566">
    <property type="term" value="F:asparaginyl-tRNA synthase (glutamine-hydrolyzing) activity"/>
    <property type="evidence" value="ECO:0007669"/>
    <property type="project" value="RHEA"/>
</dbReference>
<dbReference type="GO" id="GO:0005524">
    <property type="term" value="F:ATP binding"/>
    <property type="evidence" value="ECO:0007669"/>
    <property type="project" value="UniProtKB-KW"/>
</dbReference>
<dbReference type="GO" id="GO:0050567">
    <property type="term" value="F:glutaminyl-tRNA synthase (glutamine-hydrolyzing) activity"/>
    <property type="evidence" value="ECO:0007669"/>
    <property type="project" value="UniProtKB-UniRule"/>
</dbReference>
<dbReference type="GO" id="GO:0070681">
    <property type="term" value="P:glutaminyl-tRNAGln biosynthesis via transamidation"/>
    <property type="evidence" value="ECO:0007669"/>
    <property type="project" value="TreeGrafter"/>
</dbReference>
<dbReference type="GO" id="GO:0006450">
    <property type="term" value="P:regulation of translational fidelity"/>
    <property type="evidence" value="ECO:0007669"/>
    <property type="project" value="InterPro"/>
</dbReference>
<dbReference type="GO" id="GO:0006412">
    <property type="term" value="P:translation"/>
    <property type="evidence" value="ECO:0007669"/>
    <property type="project" value="UniProtKB-UniRule"/>
</dbReference>
<dbReference type="Gene3D" id="1.10.20.60">
    <property type="entry name" value="Glu-tRNAGln amidotransferase C subunit, N-terminal domain"/>
    <property type="match status" value="1"/>
</dbReference>
<dbReference type="HAMAP" id="MF_00122">
    <property type="entry name" value="GatC"/>
    <property type="match status" value="1"/>
</dbReference>
<dbReference type="InterPro" id="IPR036113">
    <property type="entry name" value="Asp/Glu-ADT_sf_sub_c"/>
</dbReference>
<dbReference type="InterPro" id="IPR003837">
    <property type="entry name" value="GatC"/>
</dbReference>
<dbReference type="NCBIfam" id="TIGR00135">
    <property type="entry name" value="gatC"/>
    <property type="match status" value="1"/>
</dbReference>
<dbReference type="PANTHER" id="PTHR15004">
    <property type="entry name" value="GLUTAMYL-TRNA(GLN) AMIDOTRANSFERASE SUBUNIT C, MITOCHONDRIAL"/>
    <property type="match status" value="1"/>
</dbReference>
<dbReference type="PANTHER" id="PTHR15004:SF0">
    <property type="entry name" value="GLUTAMYL-TRNA(GLN) AMIDOTRANSFERASE SUBUNIT C, MITOCHONDRIAL"/>
    <property type="match status" value="1"/>
</dbReference>
<dbReference type="Pfam" id="PF02686">
    <property type="entry name" value="GatC"/>
    <property type="match status" value="1"/>
</dbReference>
<dbReference type="SUPFAM" id="SSF141000">
    <property type="entry name" value="Glu-tRNAGln amidotransferase C subunit"/>
    <property type="match status" value="1"/>
</dbReference>
<name>GATC_ALBFT</name>
<gene>
    <name evidence="1" type="primary">gatC</name>
    <name type="ordered locus">Rfer_3924</name>
</gene>
<accession>Q21RI0</accession>
<protein>
    <recommendedName>
        <fullName evidence="1">Aspartyl/glutamyl-tRNA(Asn/Gln) amidotransferase subunit C</fullName>
        <shortName evidence="1">Asp/Glu-ADT subunit C</shortName>
        <ecNumber evidence="1">6.3.5.-</ecNumber>
    </recommendedName>
</protein>
<reference key="1">
    <citation type="submission" date="2006-02" db="EMBL/GenBank/DDBJ databases">
        <title>Complete sequence of chromosome of Rhodoferax ferrireducens DSM 15236.</title>
        <authorList>
            <person name="Copeland A."/>
            <person name="Lucas S."/>
            <person name="Lapidus A."/>
            <person name="Barry K."/>
            <person name="Detter J.C."/>
            <person name="Glavina del Rio T."/>
            <person name="Hammon N."/>
            <person name="Israni S."/>
            <person name="Pitluck S."/>
            <person name="Brettin T."/>
            <person name="Bruce D."/>
            <person name="Han C."/>
            <person name="Tapia R."/>
            <person name="Gilna P."/>
            <person name="Kiss H."/>
            <person name="Schmutz J."/>
            <person name="Larimer F."/>
            <person name="Land M."/>
            <person name="Kyrpides N."/>
            <person name="Ivanova N."/>
            <person name="Richardson P."/>
        </authorList>
    </citation>
    <scope>NUCLEOTIDE SEQUENCE [LARGE SCALE GENOMIC DNA]</scope>
    <source>
        <strain>ATCC BAA-621 / DSM 15236 / T118</strain>
    </source>
</reference>
<feature type="chain" id="PRO_1000016190" description="Aspartyl/glutamyl-tRNA(Asn/Gln) amidotransferase subunit C">
    <location>
        <begin position="1"/>
        <end position="99"/>
    </location>
</feature>
<keyword id="KW-0067">ATP-binding</keyword>
<keyword id="KW-0436">Ligase</keyword>
<keyword id="KW-0547">Nucleotide-binding</keyword>
<keyword id="KW-0648">Protein biosynthesis</keyword>
<keyword id="KW-1185">Reference proteome</keyword>
<comment type="function">
    <text evidence="1">Allows the formation of correctly charged Asn-tRNA(Asn) or Gln-tRNA(Gln) through the transamidation of misacylated Asp-tRNA(Asn) or Glu-tRNA(Gln) in organisms which lack either or both of asparaginyl-tRNA or glutaminyl-tRNA synthetases. The reaction takes place in the presence of glutamine and ATP through an activated phospho-Asp-tRNA(Asn) or phospho-Glu-tRNA(Gln).</text>
</comment>
<comment type="catalytic activity">
    <reaction evidence="1">
        <text>L-glutamyl-tRNA(Gln) + L-glutamine + ATP + H2O = L-glutaminyl-tRNA(Gln) + L-glutamate + ADP + phosphate + H(+)</text>
        <dbReference type="Rhea" id="RHEA:17521"/>
        <dbReference type="Rhea" id="RHEA-COMP:9681"/>
        <dbReference type="Rhea" id="RHEA-COMP:9684"/>
        <dbReference type="ChEBI" id="CHEBI:15377"/>
        <dbReference type="ChEBI" id="CHEBI:15378"/>
        <dbReference type="ChEBI" id="CHEBI:29985"/>
        <dbReference type="ChEBI" id="CHEBI:30616"/>
        <dbReference type="ChEBI" id="CHEBI:43474"/>
        <dbReference type="ChEBI" id="CHEBI:58359"/>
        <dbReference type="ChEBI" id="CHEBI:78520"/>
        <dbReference type="ChEBI" id="CHEBI:78521"/>
        <dbReference type="ChEBI" id="CHEBI:456216"/>
    </reaction>
</comment>
<comment type="catalytic activity">
    <reaction evidence="1">
        <text>L-aspartyl-tRNA(Asn) + L-glutamine + ATP + H2O = L-asparaginyl-tRNA(Asn) + L-glutamate + ADP + phosphate + 2 H(+)</text>
        <dbReference type="Rhea" id="RHEA:14513"/>
        <dbReference type="Rhea" id="RHEA-COMP:9674"/>
        <dbReference type="Rhea" id="RHEA-COMP:9677"/>
        <dbReference type="ChEBI" id="CHEBI:15377"/>
        <dbReference type="ChEBI" id="CHEBI:15378"/>
        <dbReference type="ChEBI" id="CHEBI:29985"/>
        <dbReference type="ChEBI" id="CHEBI:30616"/>
        <dbReference type="ChEBI" id="CHEBI:43474"/>
        <dbReference type="ChEBI" id="CHEBI:58359"/>
        <dbReference type="ChEBI" id="CHEBI:78515"/>
        <dbReference type="ChEBI" id="CHEBI:78516"/>
        <dbReference type="ChEBI" id="CHEBI:456216"/>
    </reaction>
</comment>
<comment type="subunit">
    <text evidence="1">Heterotrimer of A, B and C subunits.</text>
</comment>
<comment type="similarity">
    <text evidence="1">Belongs to the GatC family.</text>
</comment>
<proteinExistence type="inferred from homology"/>
<evidence type="ECO:0000255" key="1">
    <source>
        <dbReference type="HAMAP-Rule" id="MF_00122"/>
    </source>
</evidence>